<sequence length="216" mass="25140">MEPRINDLQVESRVHELLDFPVHTNQISSAIYECPNDHIENPKKKPYNCPHSGAKCDVTGDIQRLLLHLRNDHNVEMSDGRSFSHRYVHHDPKHLHHATWMLTLLDCCGRKFCLYFEAFHLRKTPMYMAFMQFMGDEEEAMSFSYSLQVGGNGRKLTWQGVPRSIRDSHKTVRDSQDGLIITRKLALFFSTDNNTTDKELKLKVSGRVWREQPVSI</sequence>
<accession>Q93WE4</accession>
<accession>Q9LID2</accession>
<keyword id="KW-0963">Cytoplasm</keyword>
<keyword id="KW-0479">Metal-binding</keyword>
<keyword id="KW-0539">Nucleus</keyword>
<keyword id="KW-1185">Reference proteome</keyword>
<keyword id="KW-0862">Zinc</keyword>
<keyword id="KW-0863">Zinc-finger</keyword>
<feature type="chain" id="PRO_0000442355" description="Probable inactive E3 ubiquitin-protein ligase SINAT6">
    <location>
        <begin position="1"/>
        <end position="216"/>
    </location>
</feature>
<feature type="zinc finger region" description="SIAH-type" evidence="5">
    <location>
        <begin position="5"/>
        <end position="74"/>
    </location>
</feature>
<protein>
    <recommendedName>
        <fullName evidence="5">Probable inactive E3 ubiquitin-protein ligase SINAT6</fullName>
    </recommendedName>
    <alternativeName>
        <fullName evidence="3">Protein SEVEN IN ABSENTIA 2</fullName>
    </alternativeName>
    <alternativeName>
        <fullName evidence="7">Seven in absentia homolog 6</fullName>
    </alternativeName>
</protein>
<evidence type="ECO:0000269" key="1">
    <source>
    </source>
</evidence>
<evidence type="ECO:0000269" key="2">
    <source>
    </source>
</evidence>
<evidence type="ECO:0000303" key="3">
    <source>
    </source>
</evidence>
<evidence type="ECO:0000303" key="4">
    <source>
    </source>
</evidence>
<evidence type="ECO:0000305" key="5"/>
<evidence type="ECO:0000305" key="6">
    <source>
    </source>
</evidence>
<evidence type="ECO:0000305" key="7">
    <source>
    </source>
</evidence>
<evidence type="ECO:0000312" key="8">
    <source>
        <dbReference type="Araport" id="AT3G13672"/>
    </source>
</evidence>
<gene>
    <name evidence="4" type="primary">SINAT6</name>
    <name evidence="3" type="synonym">SINA2</name>
    <name evidence="8" type="ordered locus">At3g13672</name>
</gene>
<reference key="1">
    <citation type="journal article" date="2000" name="DNA Res.">
        <title>Structural analysis of Arabidopsis thaliana chromosome 3. II. Sequence features of the 4,251,695 bp regions covered by 90 P1, TAC and BAC clones.</title>
        <authorList>
            <person name="Kaneko T."/>
            <person name="Katoh T."/>
            <person name="Sato S."/>
            <person name="Nakamura Y."/>
            <person name="Asamizu E."/>
            <person name="Tabata S."/>
        </authorList>
    </citation>
    <scope>NUCLEOTIDE SEQUENCE [LARGE SCALE GENOMIC DNA]</scope>
    <source>
        <strain>cv. Columbia</strain>
    </source>
</reference>
<reference key="2">
    <citation type="journal article" date="2017" name="Plant J.">
        <title>Araport11: a complete reannotation of the Arabidopsis thaliana reference genome.</title>
        <authorList>
            <person name="Cheng C.Y."/>
            <person name="Krishnakumar V."/>
            <person name="Chan A.P."/>
            <person name="Thibaud-Nissen F."/>
            <person name="Schobel S."/>
            <person name="Town C.D."/>
        </authorList>
    </citation>
    <scope>GENOME REANNOTATION</scope>
    <source>
        <strain>cv. Columbia</strain>
    </source>
</reference>
<reference key="3">
    <citation type="journal article" date="2003" name="Science">
        <title>Empirical analysis of transcriptional activity in the Arabidopsis genome.</title>
        <authorList>
            <person name="Yamada K."/>
            <person name="Lim J."/>
            <person name="Dale J.M."/>
            <person name="Chen H."/>
            <person name="Shinn P."/>
            <person name="Palm C.J."/>
            <person name="Southwick A.M."/>
            <person name="Wu H.C."/>
            <person name="Kim C.J."/>
            <person name="Nguyen M."/>
            <person name="Pham P.K."/>
            <person name="Cheuk R.F."/>
            <person name="Karlin-Newmann G."/>
            <person name="Liu S.X."/>
            <person name="Lam B."/>
            <person name="Sakano H."/>
            <person name="Wu T."/>
            <person name="Yu G."/>
            <person name="Miranda M."/>
            <person name="Quach H.L."/>
            <person name="Tripp M."/>
            <person name="Chang C.H."/>
            <person name="Lee J.M."/>
            <person name="Toriumi M.J."/>
            <person name="Chan M.M."/>
            <person name="Tang C.C."/>
            <person name="Onodera C.S."/>
            <person name="Deng J.M."/>
            <person name="Akiyama K."/>
            <person name="Ansari Y."/>
            <person name="Arakawa T."/>
            <person name="Banh J."/>
            <person name="Banno F."/>
            <person name="Bowser L."/>
            <person name="Brooks S.Y."/>
            <person name="Carninci P."/>
            <person name="Chao Q."/>
            <person name="Choy N."/>
            <person name="Enju A."/>
            <person name="Goldsmith A.D."/>
            <person name="Gurjal M."/>
            <person name="Hansen N.F."/>
            <person name="Hayashizaki Y."/>
            <person name="Johnson-Hopson C."/>
            <person name="Hsuan V.W."/>
            <person name="Iida K."/>
            <person name="Karnes M."/>
            <person name="Khan S."/>
            <person name="Koesema E."/>
            <person name="Ishida J."/>
            <person name="Jiang P.X."/>
            <person name="Jones T."/>
            <person name="Kawai J."/>
            <person name="Kamiya A."/>
            <person name="Meyers C."/>
            <person name="Nakajima M."/>
            <person name="Narusaka M."/>
            <person name="Seki M."/>
            <person name="Sakurai T."/>
            <person name="Satou M."/>
            <person name="Tamse R."/>
            <person name="Vaysberg M."/>
            <person name="Wallender E.K."/>
            <person name="Wong C."/>
            <person name="Yamamura Y."/>
            <person name="Yuan S."/>
            <person name="Shinozaki K."/>
            <person name="Davis R.W."/>
            <person name="Theologis A."/>
            <person name="Ecker J.R."/>
        </authorList>
    </citation>
    <scope>NUCLEOTIDE SEQUENCE [LARGE SCALE MRNA]</scope>
    <source>
        <strain>cv. Columbia</strain>
    </source>
</reference>
<reference key="4">
    <citation type="journal article" date="2014" name="New Phytol.">
        <title>The tumor necrosis factor receptor-associated factor (TRAF)-like family protein SEVEN IN ABSENTIA 2 (SINA2) promotes drought tolerance in an ABA-dependent manner in Arabidopsis.</title>
        <authorList>
            <person name="Bao Y."/>
            <person name="Wang C."/>
            <person name="Jiang C."/>
            <person name="Pan J."/>
            <person name="Zhang G."/>
            <person name="Liu H."/>
            <person name="Zhang H."/>
        </authorList>
    </citation>
    <scope>FUNCTION</scope>
    <scope>HOMODIMERIZATION</scope>
    <scope>INTERACTION WITH SINAT1; SINAT2; SINAT3; SINAT4 AND SINAT5</scope>
    <scope>TISSUE SPECIFICITY</scope>
    <scope>INDUCTION</scope>
    <scope>DISRUPTION PHENOTYPE</scope>
</reference>
<reference key="5">
    <citation type="journal article" date="2017" name="Plant Cell">
        <title>TRAF family proteins regulate autophagy dynamics by modulating AUTOPHAGY PROTEIN6 stability in Arabidopsis.</title>
        <authorList>
            <person name="Qi H."/>
            <person name="Xia F.N."/>
            <person name="Xie L.J."/>
            <person name="Yu L.J."/>
            <person name="Chen Q.F."/>
            <person name="Zhuang X.H."/>
            <person name="Wang Q."/>
            <person name="Li F."/>
            <person name="Jiang L."/>
            <person name="Xie Q."/>
            <person name="Xiao S."/>
        </authorList>
    </citation>
    <scope>FUNCTION</scope>
    <scope>INTERACTION WITH ATG6 AND TRAF1A</scope>
</reference>
<organism>
    <name type="scientific">Arabidopsis thaliana</name>
    <name type="common">Mouse-ear cress</name>
    <dbReference type="NCBI Taxonomy" id="3702"/>
    <lineage>
        <taxon>Eukaryota</taxon>
        <taxon>Viridiplantae</taxon>
        <taxon>Streptophyta</taxon>
        <taxon>Embryophyta</taxon>
        <taxon>Tracheophyta</taxon>
        <taxon>Spermatophyta</taxon>
        <taxon>Magnoliopsida</taxon>
        <taxon>eudicotyledons</taxon>
        <taxon>Gunneridae</taxon>
        <taxon>Pentapetalae</taxon>
        <taxon>rosids</taxon>
        <taxon>malvids</taxon>
        <taxon>Brassicales</taxon>
        <taxon>Brassicaceae</taxon>
        <taxon>Camelineae</taxon>
        <taxon>Arabidopsis</taxon>
    </lineage>
</organism>
<comment type="function">
    <text evidence="1 2">Probable inactive E3 ubiquitin-protein ligase that plays a role in regulation of autophagy. Upon starvation, involved in maintaining ATG6 homeostasis by competitively associating with ATG6, a component of the autophagosome complex (PubMed:28351989). Acts as a positive regulator of drought stress response. Functions as a positive regulator of abscisic acid-mediated stomatal closure (PubMed:24350984).</text>
</comment>
<comment type="subunit">
    <text evidence="1 2">Homodimer (PubMed:24350984). Interacts with SINAT1, SINAT2, SINAT3, SINAT4 and SINAT5 (PubMed:24350984). Interacts with ATG6 and TRAF1A (PubMed:28351989).</text>
</comment>
<comment type="interaction">
    <interactant intactId="EBI-4446419">
        <id>Q93WE4</id>
    </interactant>
    <interactant intactId="EBI-4473692">
        <id>O80575</id>
        <label>At2g44050</label>
    </interactant>
    <organismsDiffer>false</organismsDiffer>
    <experiments>3</experiments>
</comment>
<comment type="interaction">
    <interactant intactId="EBI-4446419">
        <id>Q93WE4</id>
    </interactant>
    <interactant intactId="EBI-25506855">
        <id>O23160</id>
        <label>MYB73</label>
    </interactant>
    <organismsDiffer>false</organismsDiffer>
    <experiments>3</experiments>
</comment>
<comment type="subcellular location">
    <subcellularLocation>
        <location evidence="1">Cytoplasm</location>
    </subcellularLocation>
    <subcellularLocation>
        <location evidence="1">Nucleus</location>
    </subcellularLocation>
</comment>
<comment type="tissue specificity">
    <text evidence="1">Expressed in roots, rosette leaves, cauline leaves, guard cells and flowers.</text>
</comment>
<comment type="induction">
    <text evidence="1">Induced by abscisic acid (ABA) and salt stress.</text>
</comment>
<comment type="disruption phenotype">
    <text evidence="1">No visible phenotype under normal growth conditions, but mutant plants are hypersensitive to drought stress.</text>
</comment>
<comment type="similarity">
    <text evidence="5">Belongs to the SINA (Seven in absentia) family.</text>
</comment>
<comment type="caution">
    <text evidence="6">Lacks the RING-type zinc finger domain that is essential for ubiquitin ligase activity. May not possess E3 ubiquitin-protein ligase activity by itself.</text>
</comment>
<comment type="sequence caution" evidence="5">
    <conflict type="erroneous gene model prediction">
        <sequence resource="EMBL-CDS" id="BAB01915"/>
    </conflict>
</comment>
<name>SINA6_ARATH</name>
<proteinExistence type="evidence at protein level"/>
<dbReference type="EMBL" id="AP001307">
    <property type="protein sequence ID" value="BAB01915.1"/>
    <property type="status" value="ALT_SEQ"/>
    <property type="molecule type" value="Genomic_DNA"/>
</dbReference>
<dbReference type="EMBL" id="CP002686">
    <property type="protein sequence ID" value="AEE75391.1"/>
    <property type="molecule type" value="Genomic_DNA"/>
</dbReference>
<dbReference type="EMBL" id="AF370175">
    <property type="protein sequence ID" value="AAK43990.1"/>
    <property type="molecule type" value="mRNA"/>
</dbReference>
<dbReference type="EMBL" id="AY059135">
    <property type="protein sequence ID" value="AAL15241.1"/>
    <property type="molecule type" value="mRNA"/>
</dbReference>
<dbReference type="RefSeq" id="NP_187978.1">
    <property type="nucleotide sequence ID" value="NM_112215.2"/>
</dbReference>
<dbReference type="SMR" id="Q93WE4"/>
<dbReference type="FunCoup" id="Q93WE4">
    <property type="interactions" value="460"/>
</dbReference>
<dbReference type="IntAct" id="Q93WE4">
    <property type="interactions" value="5"/>
</dbReference>
<dbReference type="STRING" id="3702.Q93WE4"/>
<dbReference type="PaxDb" id="3702-AT3G13672.2"/>
<dbReference type="EnsemblPlants" id="AT3G13672.1">
    <property type="protein sequence ID" value="AT3G13672.1"/>
    <property type="gene ID" value="AT3G13672"/>
</dbReference>
<dbReference type="GeneID" id="820573"/>
<dbReference type="Gramene" id="AT3G13672.1">
    <property type="protein sequence ID" value="AT3G13672.1"/>
    <property type="gene ID" value="AT3G13672"/>
</dbReference>
<dbReference type="KEGG" id="ath:AT3G13672"/>
<dbReference type="Araport" id="AT3G13672"/>
<dbReference type="TAIR" id="AT3G13672">
    <property type="gene designation" value="SINA2"/>
</dbReference>
<dbReference type="eggNOG" id="KOG3002">
    <property type="taxonomic scope" value="Eukaryota"/>
</dbReference>
<dbReference type="InParanoid" id="Q93WE4"/>
<dbReference type="OrthoDB" id="941555at2759"/>
<dbReference type="PhylomeDB" id="Q93WE4"/>
<dbReference type="PRO" id="PR:Q93WE4"/>
<dbReference type="Proteomes" id="UP000006548">
    <property type="component" value="Chromosome 3"/>
</dbReference>
<dbReference type="ExpressionAtlas" id="Q93WE4">
    <property type="expression patterns" value="baseline and differential"/>
</dbReference>
<dbReference type="GO" id="GO:0005737">
    <property type="term" value="C:cytoplasm"/>
    <property type="evidence" value="ECO:0000314"/>
    <property type="project" value="UniProtKB"/>
</dbReference>
<dbReference type="GO" id="GO:0005634">
    <property type="term" value="C:nucleus"/>
    <property type="evidence" value="ECO:0000314"/>
    <property type="project" value="UniProtKB"/>
</dbReference>
<dbReference type="GO" id="GO:0042803">
    <property type="term" value="F:protein homodimerization activity"/>
    <property type="evidence" value="ECO:0000353"/>
    <property type="project" value="UniProtKB"/>
</dbReference>
<dbReference type="GO" id="GO:0008270">
    <property type="term" value="F:zinc ion binding"/>
    <property type="evidence" value="ECO:0007669"/>
    <property type="project" value="UniProtKB-KW"/>
</dbReference>
<dbReference type="GO" id="GO:1902584">
    <property type="term" value="P:positive regulation of response to water deprivation"/>
    <property type="evidence" value="ECO:0000315"/>
    <property type="project" value="UniProtKB"/>
</dbReference>
<dbReference type="GO" id="GO:0016567">
    <property type="term" value="P:protein ubiquitination"/>
    <property type="evidence" value="ECO:0000314"/>
    <property type="project" value="UniProtKB"/>
</dbReference>
<dbReference type="GO" id="GO:2000785">
    <property type="term" value="P:regulation of autophagosome assembly"/>
    <property type="evidence" value="ECO:0000315"/>
    <property type="project" value="UniProtKB"/>
</dbReference>
<dbReference type="GO" id="GO:0006511">
    <property type="term" value="P:ubiquitin-dependent protein catabolic process"/>
    <property type="evidence" value="ECO:0007669"/>
    <property type="project" value="InterPro"/>
</dbReference>
<dbReference type="FunFam" id="2.60.210.10:FF:000004">
    <property type="entry name" value="E3 ubiquitin-protein ligase SINAT5-like"/>
    <property type="match status" value="1"/>
</dbReference>
<dbReference type="Gene3D" id="2.60.210.10">
    <property type="entry name" value="Apoptosis, Tumor Necrosis Factor Receptor Associated Protein 2, Chain A"/>
    <property type="match status" value="1"/>
</dbReference>
<dbReference type="Gene3D" id="3.30.160.60">
    <property type="entry name" value="Classic Zinc Finger"/>
    <property type="match status" value="1"/>
</dbReference>
<dbReference type="InterPro" id="IPR018121">
    <property type="entry name" value="7-in-absentia-prot_TRAF-dom"/>
</dbReference>
<dbReference type="InterPro" id="IPR052088">
    <property type="entry name" value="E3_ubiquitin-ligase_SINA"/>
</dbReference>
<dbReference type="InterPro" id="IPR008974">
    <property type="entry name" value="TRAF-like"/>
</dbReference>
<dbReference type="PANTHER" id="PTHR10315">
    <property type="entry name" value="E3 UBIQUITIN PROTEIN LIGASE SIAH"/>
    <property type="match status" value="1"/>
</dbReference>
<dbReference type="PANTHER" id="PTHR10315:SF167">
    <property type="entry name" value="INACTIVE E3 UBIQUITIN-PROTEIN LIGASE SINAT6-RELATED"/>
    <property type="match status" value="1"/>
</dbReference>
<dbReference type="Pfam" id="PF03145">
    <property type="entry name" value="Sina_TRAF"/>
    <property type="match status" value="1"/>
</dbReference>
<dbReference type="Pfam" id="PF21361">
    <property type="entry name" value="Sina_ZnF"/>
    <property type="match status" value="1"/>
</dbReference>
<dbReference type="SUPFAM" id="SSF49599">
    <property type="entry name" value="TRAF domain-like"/>
    <property type="match status" value="1"/>
</dbReference>